<comment type="function">
    <text evidence="1">Catalyzes the transfer of the diacylglyceryl group from phosphatidylglycerol to the sulfhydryl group of the N-terminal cysteine of a prolipoprotein, the first step in the formation of mature lipoproteins.</text>
</comment>
<comment type="catalytic activity">
    <reaction evidence="1">
        <text>L-cysteinyl-[prolipoprotein] + a 1,2-diacyl-sn-glycero-3-phospho-(1'-sn-glycerol) = an S-1,2-diacyl-sn-glyceryl-L-cysteinyl-[prolipoprotein] + sn-glycerol 1-phosphate + H(+)</text>
        <dbReference type="Rhea" id="RHEA:56712"/>
        <dbReference type="Rhea" id="RHEA-COMP:14679"/>
        <dbReference type="Rhea" id="RHEA-COMP:14680"/>
        <dbReference type="ChEBI" id="CHEBI:15378"/>
        <dbReference type="ChEBI" id="CHEBI:29950"/>
        <dbReference type="ChEBI" id="CHEBI:57685"/>
        <dbReference type="ChEBI" id="CHEBI:64716"/>
        <dbReference type="ChEBI" id="CHEBI:140658"/>
        <dbReference type="EC" id="2.5.1.145"/>
    </reaction>
</comment>
<comment type="pathway">
    <text evidence="1">Protein modification; lipoprotein biosynthesis (diacylglyceryl transfer).</text>
</comment>
<comment type="subcellular location">
    <subcellularLocation>
        <location evidence="1">Cell membrane</location>
        <topology evidence="1">Multi-pass membrane protein</topology>
    </subcellularLocation>
</comment>
<comment type="similarity">
    <text evidence="1 2">Belongs to the Lgt family.</text>
</comment>
<proteinExistence type="inferred from homology"/>
<protein>
    <recommendedName>
        <fullName evidence="1">Phosphatidylglycerol--prolipoprotein diacylglyceryl transferase</fullName>
        <ecNumber evidence="1">2.5.1.145</ecNumber>
    </recommendedName>
</protein>
<sequence length="389" mass="44596">MNPSVSSRPPWSTAFYLGPGFPIQWYGIIVAIGIAFGILMFVLKLIYFYKIQDNSFYFFIFIAVLTMVLGARAWYFLIEAVDGRSSGSNFFDFRNGGLAIQGGVLLTTLAGIIYFNVFLNMKTTKTKTTAKLLNNKNQIKTVYVERNISVFVMLDLIAPCVLIGQAIGRWGNFFNAEVYGAALVGSKNDTLSAANTTWGFLRILMPKVWDGMFINGSFRIPLFLIESFFNTIFFVFIYFVMDHIKGIRSGTIGFSYFLATGIVRLILETQRDEAFKYNTSIVFSALLILVGIVGIIYCQTLAIKLRGYFWTYFFLYGWYKVAAFFTTLFMKDRTQACSSKFAFYEKSLPEKERSFFQLKYYNDVLPPKIYRLYDHEMLMFDKLEAVPEA</sequence>
<dbReference type="EC" id="2.5.1.145" evidence="1"/>
<dbReference type="EMBL" id="U00089">
    <property type="protein sequence ID" value="AAB96255.1"/>
    <property type="molecule type" value="Genomic_DNA"/>
</dbReference>
<dbReference type="PIR" id="S73933">
    <property type="entry name" value="S73933"/>
</dbReference>
<dbReference type="RefSeq" id="NP_109912.1">
    <property type="nucleotide sequence ID" value="NC_000912.1"/>
</dbReference>
<dbReference type="RefSeq" id="WP_010874581.1">
    <property type="nucleotide sequence ID" value="NZ_OU342337.1"/>
</dbReference>
<dbReference type="STRING" id="272634.MPN_224"/>
<dbReference type="EnsemblBacteria" id="AAB96255">
    <property type="protein sequence ID" value="AAB96255"/>
    <property type="gene ID" value="MPN_224"/>
</dbReference>
<dbReference type="GeneID" id="66609130"/>
<dbReference type="KEGG" id="mpn:MPN_224"/>
<dbReference type="PATRIC" id="fig|272634.6.peg.243"/>
<dbReference type="HOGENOM" id="CLU_013386_0_2_14"/>
<dbReference type="OrthoDB" id="871140at2"/>
<dbReference type="BioCyc" id="MPNE272634:G1GJ3-359-MONOMER"/>
<dbReference type="UniPathway" id="UPA00664"/>
<dbReference type="Proteomes" id="UP000000808">
    <property type="component" value="Chromosome"/>
</dbReference>
<dbReference type="GO" id="GO:0005886">
    <property type="term" value="C:plasma membrane"/>
    <property type="evidence" value="ECO:0007669"/>
    <property type="project" value="UniProtKB-SubCell"/>
</dbReference>
<dbReference type="GO" id="GO:0008961">
    <property type="term" value="F:phosphatidylglycerol-prolipoprotein diacylglyceryl transferase activity"/>
    <property type="evidence" value="ECO:0007669"/>
    <property type="project" value="UniProtKB-UniRule"/>
</dbReference>
<dbReference type="GO" id="GO:0042158">
    <property type="term" value="P:lipoprotein biosynthetic process"/>
    <property type="evidence" value="ECO:0007669"/>
    <property type="project" value="UniProtKB-UniRule"/>
</dbReference>
<dbReference type="HAMAP" id="MF_01147">
    <property type="entry name" value="Lgt"/>
    <property type="match status" value="1"/>
</dbReference>
<dbReference type="InterPro" id="IPR001640">
    <property type="entry name" value="Lgt"/>
</dbReference>
<dbReference type="NCBIfam" id="TIGR00544">
    <property type="entry name" value="lgt"/>
    <property type="match status" value="1"/>
</dbReference>
<dbReference type="PANTHER" id="PTHR30589:SF0">
    <property type="entry name" value="PHOSPHATIDYLGLYCEROL--PROLIPOPROTEIN DIACYLGLYCERYL TRANSFERASE"/>
    <property type="match status" value="1"/>
</dbReference>
<dbReference type="PANTHER" id="PTHR30589">
    <property type="entry name" value="PROLIPOPROTEIN DIACYLGLYCERYL TRANSFERASE"/>
    <property type="match status" value="1"/>
</dbReference>
<dbReference type="Pfam" id="PF01790">
    <property type="entry name" value="LGT"/>
    <property type="match status" value="2"/>
</dbReference>
<dbReference type="PROSITE" id="PS01311">
    <property type="entry name" value="LGT"/>
    <property type="match status" value="1"/>
</dbReference>
<organism>
    <name type="scientific">Mycoplasma pneumoniae (strain ATCC 29342 / M129 / Subtype 1)</name>
    <name type="common">Mycoplasmoides pneumoniae</name>
    <dbReference type="NCBI Taxonomy" id="272634"/>
    <lineage>
        <taxon>Bacteria</taxon>
        <taxon>Bacillati</taxon>
        <taxon>Mycoplasmatota</taxon>
        <taxon>Mycoplasmoidales</taxon>
        <taxon>Mycoplasmoidaceae</taxon>
        <taxon>Mycoplasmoides</taxon>
    </lineage>
</organism>
<gene>
    <name evidence="1" type="primary">lgt</name>
    <name type="ordered locus">MPN_224</name>
    <name type="ORF">MP607</name>
</gene>
<reference key="1">
    <citation type="journal article" date="1996" name="Nucleic Acids Res.">
        <title>Complete sequence analysis of the genome of the bacterium Mycoplasma pneumoniae.</title>
        <authorList>
            <person name="Himmelreich R."/>
            <person name="Hilbert H."/>
            <person name="Plagens H."/>
            <person name="Pirkl E."/>
            <person name="Li B.-C."/>
            <person name="Herrmann R."/>
        </authorList>
    </citation>
    <scope>NUCLEOTIDE SEQUENCE [LARGE SCALE GENOMIC DNA]</scope>
    <source>
        <strain>ATCC 29342 / M129 / Subtype 1</strain>
    </source>
</reference>
<keyword id="KW-1003">Cell membrane</keyword>
<keyword id="KW-0472">Membrane</keyword>
<keyword id="KW-1185">Reference proteome</keyword>
<keyword id="KW-0808">Transferase</keyword>
<keyword id="KW-0812">Transmembrane</keyword>
<keyword id="KW-1133">Transmembrane helix</keyword>
<name>LGT_MYCPN</name>
<feature type="chain" id="PRO_0000172637" description="Phosphatidylglycerol--prolipoprotein diacylglyceryl transferase">
    <location>
        <begin position="1"/>
        <end position="389"/>
    </location>
</feature>
<feature type="transmembrane region" description="Helical" evidence="1">
    <location>
        <begin position="28"/>
        <end position="48"/>
    </location>
</feature>
<feature type="transmembrane region" description="Helical" evidence="1">
    <location>
        <begin position="58"/>
        <end position="78"/>
    </location>
</feature>
<feature type="transmembrane region" description="Helical" evidence="1">
    <location>
        <begin position="98"/>
        <end position="118"/>
    </location>
</feature>
<feature type="transmembrane region" description="Helical" evidence="1">
    <location>
        <begin position="148"/>
        <end position="168"/>
    </location>
</feature>
<feature type="transmembrane region" description="Helical" evidence="1">
    <location>
        <begin position="220"/>
        <end position="240"/>
    </location>
</feature>
<feature type="transmembrane region" description="Helical" evidence="1">
    <location>
        <begin position="281"/>
        <end position="301"/>
    </location>
</feature>
<feature type="transmembrane region" description="Helical" evidence="1">
    <location>
        <begin position="309"/>
        <end position="329"/>
    </location>
</feature>
<feature type="binding site" evidence="1">
    <location>
        <position position="169"/>
    </location>
    <ligand>
        <name>a 1,2-diacyl-sn-glycero-3-phospho-(1'-sn-glycerol)</name>
        <dbReference type="ChEBI" id="CHEBI:64716"/>
    </ligand>
</feature>
<accession>P75547</accession>
<evidence type="ECO:0000255" key="1">
    <source>
        <dbReference type="HAMAP-Rule" id="MF_01147"/>
    </source>
</evidence>
<evidence type="ECO:0000305" key="2"/>